<accession>P00954</accession>
<accession>Q2M749</accession>
<evidence type="ECO:0000255" key="1">
    <source>
        <dbReference type="HAMAP-Rule" id="MF_00140"/>
    </source>
</evidence>
<evidence type="ECO:0000269" key="2">
    <source>
    </source>
</evidence>
<evidence type="ECO:0000305" key="3"/>
<evidence type="ECO:0007829" key="4">
    <source>
        <dbReference type="PDB" id="8I1Y"/>
    </source>
</evidence>
<evidence type="ECO:0007829" key="5">
    <source>
        <dbReference type="PDB" id="8I2C"/>
    </source>
</evidence>
<sequence>MTKPIVFSGAQPSGELTIGNYMGALRQWVNMQDDYHCIYCIVDQHAITVRQDAQKLRKATLDTLALYLACGIDPEKSTIFVQSHVPEHAQLGWALNCYTYFGELSRMTQFKDKSARYAENINAGLFDYPVLMAADILLYQTNLVPVGEDQKQHLELSRDIAQRFNALYGEIFKVPEPFIPKSGARVMSLLEPTKKMSKSDDNRNNVIGLLEDPKSVVKKIKRAVTDSDEPPVVRYDVQNKAGVSNLLDILSAVTGQSIPELEKQFEGKMYGHLKGEVADAVSGMLTELQERYHRFRNDEAFLQQVMKDGAEKASAHASRTLKAVYEAIGFVAKP</sequence>
<proteinExistence type="evidence at protein level"/>
<keyword id="KW-0002">3D-structure</keyword>
<keyword id="KW-0030">Aminoacyl-tRNA synthetase</keyword>
<keyword id="KW-0067">ATP-binding</keyword>
<keyword id="KW-0963">Cytoplasm</keyword>
<keyword id="KW-0436">Ligase</keyword>
<keyword id="KW-0547">Nucleotide-binding</keyword>
<keyword id="KW-0648">Protein biosynthesis</keyword>
<keyword id="KW-1185">Reference proteome</keyword>
<name>SYW_ECOLI</name>
<dbReference type="EC" id="6.1.1.2" evidence="1 2"/>
<dbReference type="EMBL" id="V00371">
    <property type="protein sequence ID" value="CAA23670.1"/>
    <property type="molecule type" value="Genomic_DNA"/>
</dbReference>
<dbReference type="EMBL" id="Z19601">
    <property type="protein sequence ID" value="CAA79669.1"/>
    <property type="molecule type" value="Genomic_DNA"/>
</dbReference>
<dbReference type="EMBL" id="U38647">
    <property type="protein sequence ID" value="AAA92300.1"/>
    <property type="molecule type" value="Genomic_DNA"/>
</dbReference>
<dbReference type="EMBL" id="U18997">
    <property type="protein sequence ID" value="AAA58181.1"/>
    <property type="molecule type" value="Genomic_DNA"/>
</dbReference>
<dbReference type="EMBL" id="U00096">
    <property type="protein sequence ID" value="AAC76409.1"/>
    <property type="molecule type" value="Genomic_DNA"/>
</dbReference>
<dbReference type="EMBL" id="AP009048">
    <property type="protein sequence ID" value="BAE77907.1"/>
    <property type="molecule type" value="Genomic_DNA"/>
</dbReference>
<dbReference type="PIR" id="C65133">
    <property type="entry name" value="YWEC"/>
</dbReference>
<dbReference type="RefSeq" id="NP_417843.1">
    <property type="nucleotide sequence ID" value="NC_000913.3"/>
</dbReference>
<dbReference type="RefSeq" id="WP_000165552.1">
    <property type="nucleotide sequence ID" value="NZ_SSZK01000008.1"/>
</dbReference>
<dbReference type="PDB" id="5V0I">
    <property type="method" value="X-ray"/>
    <property type="resolution" value="1.90 A"/>
    <property type="chains" value="A/B=1-334"/>
</dbReference>
<dbReference type="PDB" id="8I1W">
    <property type="method" value="X-ray"/>
    <property type="resolution" value="1.80 A"/>
    <property type="chains" value="A/B=1-333"/>
</dbReference>
<dbReference type="PDB" id="8I1Y">
    <property type="method" value="X-ray"/>
    <property type="resolution" value="1.78 A"/>
    <property type="chains" value="A/B=1-333"/>
</dbReference>
<dbReference type="PDB" id="8I1Z">
    <property type="method" value="X-ray"/>
    <property type="resolution" value="1.80 A"/>
    <property type="chains" value="A/B=1-333"/>
</dbReference>
<dbReference type="PDB" id="8I27">
    <property type="method" value="X-ray"/>
    <property type="resolution" value="1.95 A"/>
    <property type="chains" value="A/B=1-333"/>
</dbReference>
<dbReference type="PDB" id="8I2A">
    <property type="method" value="X-ray"/>
    <property type="resolution" value="2.35 A"/>
    <property type="chains" value="A/B=1-333"/>
</dbReference>
<dbReference type="PDB" id="8I2C">
    <property type="method" value="X-ray"/>
    <property type="resolution" value="2.07 A"/>
    <property type="chains" value="A/B=1-333"/>
</dbReference>
<dbReference type="PDB" id="8I2J">
    <property type="method" value="X-ray"/>
    <property type="resolution" value="2.65 A"/>
    <property type="chains" value="A/B=1-333"/>
</dbReference>
<dbReference type="PDB" id="8I2L">
    <property type="method" value="X-ray"/>
    <property type="resolution" value="1.95 A"/>
    <property type="chains" value="A/B=1-333"/>
</dbReference>
<dbReference type="PDB" id="8I2M">
    <property type="method" value="X-ray"/>
    <property type="resolution" value="2.10 A"/>
    <property type="chains" value="A/B=1-333"/>
</dbReference>
<dbReference type="PDB" id="8I4I">
    <property type="method" value="X-ray"/>
    <property type="resolution" value="2.20 A"/>
    <property type="chains" value="A/B=1-333"/>
</dbReference>
<dbReference type="PDBsum" id="5V0I"/>
<dbReference type="PDBsum" id="8I1W"/>
<dbReference type="PDBsum" id="8I1Y"/>
<dbReference type="PDBsum" id="8I1Z"/>
<dbReference type="PDBsum" id="8I27"/>
<dbReference type="PDBsum" id="8I2A"/>
<dbReference type="PDBsum" id="8I2C"/>
<dbReference type="PDBsum" id="8I2J"/>
<dbReference type="PDBsum" id="8I2L"/>
<dbReference type="PDBsum" id="8I2M"/>
<dbReference type="PDBsum" id="8I4I"/>
<dbReference type="SMR" id="P00954"/>
<dbReference type="BioGRID" id="4259293">
    <property type="interactions" value="189"/>
</dbReference>
<dbReference type="DIP" id="DIP-11042N"/>
<dbReference type="FunCoup" id="P00954">
    <property type="interactions" value="732"/>
</dbReference>
<dbReference type="IntAct" id="P00954">
    <property type="interactions" value="12"/>
</dbReference>
<dbReference type="STRING" id="511145.b3384"/>
<dbReference type="jPOST" id="P00954"/>
<dbReference type="PaxDb" id="511145-b3384"/>
<dbReference type="EnsemblBacteria" id="AAC76409">
    <property type="protein sequence ID" value="AAC76409"/>
    <property type="gene ID" value="b3384"/>
</dbReference>
<dbReference type="GeneID" id="947894"/>
<dbReference type="KEGG" id="ecj:JW3347"/>
<dbReference type="KEGG" id="eco:b3384"/>
<dbReference type="KEGG" id="ecoc:C3026_18365"/>
<dbReference type="PATRIC" id="fig|1411691.4.peg.3346"/>
<dbReference type="EchoBASE" id="EB1023"/>
<dbReference type="eggNOG" id="COG0180">
    <property type="taxonomic scope" value="Bacteria"/>
</dbReference>
<dbReference type="HOGENOM" id="CLU_029244_1_1_6"/>
<dbReference type="InParanoid" id="P00954"/>
<dbReference type="OMA" id="GWGQFKP"/>
<dbReference type="OrthoDB" id="9801042at2"/>
<dbReference type="PhylomeDB" id="P00954"/>
<dbReference type="BioCyc" id="EcoCyc:TRPS-MONOMER"/>
<dbReference type="BioCyc" id="MetaCyc:TRPS-MONOMER"/>
<dbReference type="SABIO-RK" id="P00954"/>
<dbReference type="PRO" id="PR:P00954"/>
<dbReference type="Proteomes" id="UP000000625">
    <property type="component" value="Chromosome"/>
</dbReference>
<dbReference type="GO" id="GO:0005829">
    <property type="term" value="C:cytosol"/>
    <property type="evidence" value="ECO:0000314"/>
    <property type="project" value="EcoCyc"/>
</dbReference>
<dbReference type="GO" id="GO:0005524">
    <property type="term" value="F:ATP binding"/>
    <property type="evidence" value="ECO:0007669"/>
    <property type="project" value="UniProtKB-UniRule"/>
</dbReference>
<dbReference type="GO" id="GO:0004830">
    <property type="term" value="F:tryptophan-tRNA ligase activity"/>
    <property type="evidence" value="ECO:0000314"/>
    <property type="project" value="EcoCyc"/>
</dbReference>
<dbReference type="GO" id="GO:0006436">
    <property type="term" value="P:tryptophanyl-tRNA aminoacylation"/>
    <property type="evidence" value="ECO:0000315"/>
    <property type="project" value="EcoCyc"/>
</dbReference>
<dbReference type="CDD" id="cd00806">
    <property type="entry name" value="TrpRS_core"/>
    <property type="match status" value="1"/>
</dbReference>
<dbReference type="FunFam" id="1.10.240.10:FF:000002">
    <property type="entry name" value="Tryptophan--tRNA ligase"/>
    <property type="match status" value="1"/>
</dbReference>
<dbReference type="FunFam" id="3.40.50.620:FF:000024">
    <property type="entry name" value="Tryptophan--tRNA ligase"/>
    <property type="match status" value="1"/>
</dbReference>
<dbReference type="Gene3D" id="3.40.50.620">
    <property type="entry name" value="HUPs"/>
    <property type="match status" value="1"/>
</dbReference>
<dbReference type="Gene3D" id="1.10.240.10">
    <property type="entry name" value="Tyrosyl-Transfer RNA Synthetase"/>
    <property type="match status" value="1"/>
</dbReference>
<dbReference type="HAMAP" id="MF_00140_B">
    <property type="entry name" value="Trp_tRNA_synth_B"/>
    <property type="match status" value="1"/>
</dbReference>
<dbReference type="InterPro" id="IPR001412">
    <property type="entry name" value="aa-tRNA-synth_I_CS"/>
</dbReference>
<dbReference type="InterPro" id="IPR002305">
    <property type="entry name" value="aa-tRNA-synth_Ic"/>
</dbReference>
<dbReference type="InterPro" id="IPR014729">
    <property type="entry name" value="Rossmann-like_a/b/a_fold"/>
</dbReference>
<dbReference type="InterPro" id="IPR002306">
    <property type="entry name" value="Trp-tRNA-ligase"/>
</dbReference>
<dbReference type="InterPro" id="IPR024109">
    <property type="entry name" value="Trp-tRNA-ligase_bac-type"/>
</dbReference>
<dbReference type="InterPro" id="IPR050203">
    <property type="entry name" value="Trp-tRNA_synthetase"/>
</dbReference>
<dbReference type="NCBIfam" id="TIGR00233">
    <property type="entry name" value="trpS"/>
    <property type="match status" value="1"/>
</dbReference>
<dbReference type="PANTHER" id="PTHR43766">
    <property type="entry name" value="TRYPTOPHAN--TRNA LIGASE, MITOCHONDRIAL"/>
    <property type="match status" value="1"/>
</dbReference>
<dbReference type="PANTHER" id="PTHR43766:SF1">
    <property type="entry name" value="TRYPTOPHAN--TRNA LIGASE, MITOCHONDRIAL"/>
    <property type="match status" value="1"/>
</dbReference>
<dbReference type="Pfam" id="PF00579">
    <property type="entry name" value="tRNA-synt_1b"/>
    <property type="match status" value="1"/>
</dbReference>
<dbReference type="PRINTS" id="PR01039">
    <property type="entry name" value="TRNASYNTHTRP"/>
</dbReference>
<dbReference type="SUPFAM" id="SSF52374">
    <property type="entry name" value="Nucleotidylyl transferase"/>
    <property type="match status" value="1"/>
</dbReference>
<dbReference type="PROSITE" id="PS00178">
    <property type="entry name" value="AA_TRNA_LIGASE_I"/>
    <property type="match status" value="1"/>
</dbReference>
<protein>
    <recommendedName>
        <fullName evidence="1">Tryptophan--tRNA ligase</fullName>
        <ecNumber evidence="1 2">6.1.1.2</ecNumber>
    </recommendedName>
    <alternativeName>
        <fullName evidence="1">Tryptophanyl-tRNA synthetase</fullName>
        <shortName evidence="1">TrpRS</shortName>
    </alternativeName>
</protein>
<feature type="chain" id="PRO_0000136628" description="Tryptophan--tRNA ligase">
    <location>
        <begin position="1"/>
        <end position="334"/>
    </location>
</feature>
<feature type="short sequence motif" description="'HIGH' region" evidence="1">
    <location>
        <begin position="12"/>
        <end position="20"/>
    </location>
</feature>
<feature type="short sequence motif" description="'KMSKS' region" evidence="1">
    <location>
        <begin position="195"/>
        <end position="199"/>
    </location>
</feature>
<feature type="binding site" evidence="1">
    <location>
        <begin position="11"/>
        <end position="13"/>
    </location>
    <ligand>
        <name>ATP</name>
        <dbReference type="ChEBI" id="CHEBI:30616"/>
    </ligand>
</feature>
<feature type="binding site" evidence="1">
    <location>
        <begin position="19"/>
        <end position="20"/>
    </location>
    <ligand>
        <name>ATP</name>
        <dbReference type="ChEBI" id="CHEBI:30616"/>
    </ligand>
</feature>
<feature type="binding site" evidence="1">
    <location>
        <position position="135"/>
    </location>
    <ligand>
        <name>L-tryptophan</name>
        <dbReference type="ChEBI" id="CHEBI:57912"/>
    </ligand>
</feature>
<feature type="binding site" evidence="1">
    <location>
        <begin position="147"/>
        <end position="149"/>
    </location>
    <ligand>
        <name>ATP</name>
        <dbReference type="ChEBI" id="CHEBI:30616"/>
    </ligand>
</feature>
<feature type="binding site" evidence="1">
    <location>
        <position position="186"/>
    </location>
    <ligand>
        <name>ATP</name>
        <dbReference type="ChEBI" id="CHEBI:30616"/>
    </ligand>
</feature>
<feature type="binding site" evidence="1">
    <location>
        <begin position="195"/>
        <end position="199"/>
    </location>
    <ligand>
        <name>ATP</name>
        <dbReference type="ChEBI" id="CHEBI:30616"/>
    </ligand>
</feature>
<feature type="sequence variant" description="In TRPS567C; reduced activity, thermolabile.">
    <original>T</original>
    <variation>R</variation>
    <location>
        <position position="60"/>
    </location>
</feature>
<feature type="sequence variant" description="In TRPS10330; reduced activity.">
    <original>L</original>
    <variation>F</variation>
    <location>
        <position position="91"/>
    </location>
</feature>
<feature type="sequence variant" description="In TRPS9969; no effect in activity.">
    <original>D</original>
    <variation>E</variation>
    <location>
        <position position="112"/>
    </location>
</feature>
<feature type="sequence variant" description="In TRPS9969; reduced activity.">
    <original>P</original>
    <variation>S</variation>
    <location>
        <position position="129"/>
    </location>
</feature>
<feature type="sequence variant" description="In TRPS42C; reduced activity.">
    <original>A</original>
    <variation>E</variation>
    <location>
        <position position="133"/>
    </location>
</feature>
<feature type="sequence variant" description="In TRPS271C; activity largely reduced.">
    <original>M</original>
    <variation>I</variation>
    <location>
        <position position="196"/>
    </location>
</feature>
<feature type="sequence variant" description="In TRPS4040; reduced activity.">
    <original>G</original>
    <variation>S</variation>
    <location>
        <position position="329"/>
    </location>
</feature>
<feature type="sequence conflict" description="In Ref. 1; CAA23670 and 2; CAA79669." evidence="3" ref="1 2">
    <original>N</original>
    <variation>K</variation>
    <location>
        <position position="30"/>
    </location>
</feature>
<feature type="sequence conflict" description="In Ref. 1; CAA23670 and 2; CAA79669." evidence="3" ref="1 2">
    <original>E</original>
    <variation>Q</variation>
    <location>
        <position position="326"/>
    </location>
</feature>
<feature type="sequence conflict" description="In Ref. 1; CAA23670, 2; CAA79669 and 3; AAA92300." evidence="3" ref="1 2 3">
    <original>P</original>
    <variation>R</variation>
    <location>
        <position position="334"/>
    </location>
</feature>
<feature type="strand" evidence="4">
    <location>
        <begin position="5"/>
        <end position="10"/>
    </location>
</feature>
<feature type="helix" evidence="4">
    <location>
        <begin position="18"/>
        <end position="22"/>
    </location>
</feature>
<feature type="helix" evidence="4">
    <location>
        <begin position="24"/>
        <end position="29"/>
    </location>
</feature>
<feature type="turn" evidence="4">
    <location>
        <begin position="30"/>
        <end position="34"/>
    </location>
</feature>
<feature type="strand" evidence="4">
    <location>
        <begin position="35"/>
        <end position="41"/>
    </location>
</feature>
<feature type="helix" evidence="4">
    <location>
        <begin position="43"/>
        <end position="46"/>
    </location>
</feature>
<feature type="helix" evidence="4">
    <location>
        <begin position="53"/>
        <end position="70"/>
    </location>
</feature>
<feature type="turn" evidence="4">
    <location>
        <begin position="74"/>
        <end position="76"/>
    </location>
</feature>
<feature type="strand" evidence="4">
    <location>
        <begin position="77"/>
        <end position="81"/>
    </location>
</feature>
<feature type="helix" evidence="4">
    <location>
        <begin position="82"/>
        <end position="84"/>
    </location>
</feature>
<feature type="helix" evidence="4">
    <location>
        <begin position="87"/>
        <end position="96"/>
    </location>
</feature>
<feature type="helix" evidence="4">
    <location>
        <begin position="101"/>
        <end position="105"/>
    </location>
</feature>
<feature type="helix" evidence="4">
    <location>
        <begin position="110"/>
        <end position="116"/>
    </location>
</feature>
<feature type="strand" evidence="4">
    <location>
        <begin position="120"/>
        <end position="122"/>
    </location>
</feature>
<feature type="helix" evidence="4">
    <location>
        <begin position="123"/>
        <end position="137"/>
    </location>
</feature>
<feature type="turn" evidence="4">
    <location>
        <begin position="138"/>
        <end position="140"/>
    </location>
</feature>
<feature type="strand" evidence="5">
    <location>
        <begin position="142"/>
        <end position="144"/>
    </location>
</feature>
<feature type="helix" evidence="4">
    <location>
        <begin position="148"/>
        <end position="150"/>
    </location>
</feature>
<feature type="helix" evidence="4">
    <location>
        <begin position="151"/>
        <end position="168"/>
    </location>
</feature>
<feature type="helix" evidence="4">
    <location>
        <begin position="203"/>
        <end position="205"/>
    </location>
</feature>
<feature type="helix" evidence="4">
    <location>
        <begin position="213"/>
        <end position="222"/>
    </location>
</feature>
<feature type="turn" evidence="4">
    <location>
        <begin position="237"/>
        <end position="239"/>
    </location>
</feature>
<feature type="helix" evidence="4">
    <location>
        <begin position="241"/>
        <end position="254"/>
    </location>
</feature>
<feature type="helix" evidence="4">
    <location>
        <begin position="258"/>
        <end position="264"/>
    </location>
</feature>
<feature type="turn" evidence="4">
    <location>
        <begin position="265"/>
        <end position="267"/>
    </location>
</feature>
<feature type="helix" evidence="4">
    <location>
        <begin position="270"/>
        <end position="296"/>
    </location>
</feature>
<feature type="helix" evidence="4">
    <location>
        <begin position="299"/>
        <end position="328"/>
    </location>
</feature>
<gene>
    <name evidence="1" type="primary">trpS</name>
    <name type="ordered locus">b3384</name>
    <name type="ordered locus">JW3347</name>
</gene>
<organism>
    <name type="scientific">Escherichia coli (strain K12)</name>
    <dbReference type="NCBI Taxonomy" id="83333"/>
    <lineage>
        <taxon>Bacteria</taxon>
        <taxon>Pseudomonadati</taxon>
        <taxon>Pseudomonadota</taxon>
        <taxon>Gammaproteobacteria</taxon>
        <taxon>Enterobacterales</taxon>
        <taxon>Enterobacteriaceae</taxon>
        <taxon>Escherichia</taxon>
    </lineage>
</organism>
<comment type="function">
    <text evidence="1 2">Catalyzes the attachment of tryptophan to tRNA(Trp). Amino acylates tRNA(Trp) with both L- and D-tryptophan, although D-tryptophan is a poor substrate (PubMed:10918062).</text>
</comment>
<comment type="catalytic activity">
    <reaction evidence="1 2">
        <text>tRNA(Trp) + L-tryptophan + ATP = L-tryptophyl-tRNA(Trp) + AMP + diphosphate + H(+)</text>
        <dbReference type="Rhea" id="RHEA:24080"/>
        <dbReference type="Rhea" id="RHEA-COMP:9671"/>
        <dbReference type="Rhea" id="RHEA-COMP:9705"/>
        <dbReference type="ChEBI" id="CHEBI:15378"/>
        <dbReference type="ChEBI" id="CHEBI:30616"/>
        <dbReference type="ChEBI" id="CHEBI:33019"/>
        <dbReference type="ChEBI" id="CHEBI:57912"/>
        <dbReference type="ChEBI" id="CHEBI:78442"/>
        <dbReference type="ChEBI" id="CHEBI:78535"/>
        <dbReference type="ChEBI" id="CHEBI:456215"/>
        <dbReference type="EC" id="6.1.1.2"/>
    </reaction>
</comment>
<comment type="subunit">
    <text evidence="1">Homodimer.</text>
</comment>
<comment type="subcellular location">
    <subcellularLocation>
        <location evidence="1">Cytoplasm</location>
    </subcellularLocation>
</comment>
<comment type="similarity">
    <text evidence="1">Belongs to the class-I aminoacyl-tRNA synthetase family.</text>
</comment>
<reference key="1">
    <citation type="journal article" date="1982" name="J. Biol. Chem.">
        <title>The nucleotide sequence of the structural gene for Escherichia coli tryptophanyl-tRNA synthetase.</title>
        <authorList>
            <person name="Hall C.V."/>
            <person name="van Cleemput M."/>
            <person name="Muench K.H."/>
            <person name="Yanofsky C."/>
        </authorList>
    </citation>
    <scope>NUCLEOTIDE SEQUENCE [GENOMIC DNA]</scope>
</reference>
<reference key="2">
    <citation type="journal article" date="1995" name="Mol. Gen. Genet.">
        <title>Characterization of three genes in the dam-containing operon of Escherichia coli.</title>
        <authorList>
            <person name="Lyngstadaas A."/>
            <person name="Lobner-Olesen A."/>
            <person name="Boye E."/>
        </authorList>
    </citation>
    <scope>NUCLEOTIDE SEQUENCE [GENOMIC DNA]</scope>
</reference>
<reference key="3">
    <citation type="journal article" date="1996" name="Biochemistry">
        <title>Escherichia coli tryptophanyl-tRNA synthetase mutants selected for tryptophan auxotrophy implicate the dimer interface in optimizing amino acid binding.</title>
        <authorList>
            <person name="Sever S."/>
            <person name="Rogers K."/>
            <person name="Rogers M.J."/>
            <person name="Carter C. Jr."/>
            <person name="Soell D."/>
        </authorList>
    </citation>
    <scope>NUCLEOTIDE SEQUENCE [GENOMIC DNA]</scope>
    <scope>MUTANTS</scope>
    <source>
        <strain>K12 / W3110 / ATCC 27325 / DSM 5911</strain>
    </source>
</reference>
<reference key="4">
    <citation type="journal article" date="1997" name="Science">
        <title>The complete genome sequence of Escherichia coli K-12.</title>
        <authorList>
            <person name="Blattner F.R."/>
            <person name="Plunkett G. III"/>
            <person name="Bloch C.A."/>
            <person name="Perna N.T."/>
            <person name="Burland V."/>
            <person name="Riley M."/>
            <person name="Collado-Vides J."/>
            <person name="Glasner J.D."/>
            <person name="Rode C.K."/>
            <person name="Mayhew G.F."/>
            <person name="Gregor J."/>
            <person name="Davis N.W."/>
            <person name="Kirkpatrick H.A."/>
            <person name="Goeden M.A."/>
            <person name="Rose D.J."/>
            <person name="Mau B."/>
            <person name="Shao Y."/>
        </authorList>
    </citation>
    <scope>NUCLEOTIDE SEQUENCE [LARGE SCALE GENOMIC DNA]</scope>
    <source>
        <strain>K12 / MG1655 / ATCC 47076</strain>
    </source>
</reference>
<reference key="5">
    <citation type="journal article" date="2006" name="Mol. Syst. Biol.">
        <title>Highly accurate genome sequences of Escherichia coli K-12 strains MG1655 and W3110.</title>
        <authorList>
            <person name="Hayashi K."/>
            <person name="Morooka N."/>
            <person name="Yamamoto Y."/>
            <person name="Fujita K."/>
            <person name="Isono K."/>
            <person name="Choi S."/>
            <person name="Ohtsubo E."/>
            <person name="Baba T."/>
            <person name="Wanner B.L."/>
            <person name="Mori H."/>
            <person name="Horiuchi T."/>
        </authorList>
    </citation>
    <scope>NUCLEOTIDE SEQUENCE [LARGE SCALE GENOMIC DNA]</scope>
    <source>
        <strain>K12 / W3110 / ATCC 27325 / DSM 5911</strain>
    </source>
</reference>
<reference key="6">
    <citation type="journal article" date="1977" name="FEBS Lett.">
        <title>Sequence homologies between the tryptophanyl tRNA synthetases of Bacillus stearothermophilus and Escherichia coli.</title>
        <authorList>
            <person name="Winter G.P."/>
            <person name="Hartley B.S."/>
            <person name="McLachlan A.D."/>
            <person name="Lee M."/>
            <person name="Muench K.H."/>
        </authorList>
    </citation>
    <scope>CONFIRMS PROTEIN SEQUENCE BY AMINO ACID ANALYSIS</scope>
</reference>
<reference key="7">
    <citation type="journal article" date="1981" name="J. Bacteriol.">
        <title>Cloning and characterization of the gene for Escherichia coli tryptophanyl-transfer ribonucleic acid synthetase.</title>
        <authorList>
            <person name="Hall C.V."/>
            <person name="Yanofsky C."/>
        </authorList>
    </citation>
    <scope>NUCLEOTIDE SEQUENCE [GENOMIC DNA] OF 1-11 AND 152-171</scope>
</reference>
<reference key="8">
    <citation type="journal article" date="1997" name="Electrophoresis">
        <title>Escherichia coli proteome analysis using the gene-protein database.</title>
        <authorList>
            <person name="VanBogelen R.A."/>
            <person name="Abshire K.Z."/>
            <person name="Moldover B."/>
            <person name="Olson E.R."/>
            <person name="Neidhardt F.C."/>
        </authorList>
    </citation>
    <scope>IDENTIFICATION BY 2D-GEL</scope>
</reference>
<reference key="9">
    <citation type="journal article" date="2000" name="J. Biol. Chem.">
        <title>Metabolism of D-aminoacyl-tRNAs in Escherichia coli and Saccharomyces cerevisiae cells.</title>
        <authorList>
            <person name="Soutourina J."/>
            <person name="Plateau P."/>
            <person name="Blanquet S."/>
        </authorList>
    </citation>
    <scope>FUNCTION</scope>
    <scope>CATALYTIC ACTIVITY</scope>
    <scope>SUBSTRATE SPECIFICITY</scope>
    <source>
        <strain>K12 / K37</strain>
    </source>
</reference>